<protein>
    <recommendedName>
        <fullName evidence="1">Nucleoid-associated protein Shewmr7_2293</fullName>
    </recommendedName>
</protein>
<accession>Q0HUC4</accession>
<evidence type="ECO:0000255" key="1">
    <source>
        <dbReference type="HAMAP-Rule" id="MF_00730"/>
    </source>
</evidence>
<comment type="subcellular location">
    <subcellularLocation>
        <location evidence="1">Cytoplasm</location>
        <location evidence="1">Nucleoid</location>
    </subcellularLocation>
</comment>
<comment type="similarity">
    <text evidence="1">Belongs to the YejK family.</text>
</comment>
<keyword id="KW-0963">Cytoplasm</keyword>
<dbReference type="EMBL" id="CP000444">
    <property type="protein sequence ID" value="ABI43281.1"/>
    <property type="molecule type" value="Genomic_DNA"/>
</dbReference>
<dbReference type="SMR" id="Q0HUC4"/>
<dbReference type="KEGG" id="shm:Shewmr7_2293"/>
<dbReference type="HOGENOM" id="CLU_063050_0_1_6"/>
<dbReference type="GO" id="GO:0043590">
    <property type="term" value="C:bacterial nucleoid"/>
    <property type="evidence" value="ECO:0007669"/>
    <property type="project" value="TreeGrafter"/>
</dbReference>
<dbReference type="GO" id="GO:0005737">
    <property type="term" value="C:cytoplasm"/>
    <property type="evidence" value="ECO:0007669"/>
    <property type="project" value="UniProtKB-UniRule"/>
</dbReference>
<dbReference type="GO" id="GO:0003690">
    <property type="term" value="F:double-stranded DNA binding"/>
    <property type="evidence" value="ECO:0007669"/>
    <property type="project" value="TreeGrafter"/>
</dbReference>
<dbReference type="GO" id="GO:0003727">
    <property type="term" value="F:single-stranded RNA binding"/>
    <property type="evidence" value="ECO:0007669"/>
    <property type="project" value="TreeGrafter"/>
</dbReference>
<dbReference type="HAMAP" id="MF_00730">
    <property type="entry name" value="NdpA"/>
    <property type="match status" value="1"/>
</dbReference>
<dbReference type="InterPro" id="IPR007358">
    <property type="entry name" value="Nucleoid_associated_NdpA"/>
</dbReference>
<dbReference type="NCBIfam" id="NF001557">
    <property type="entry name" value="PRK00378.1"/>
    <property type="match status" value="1"/>
</dbReference>
<dbReference type="PANTHER" id="PTHR38772">
    <property type="match status" value="1"/>
</dbReference>
<dbReference type="PANTHER" id="PTHR38772:SF1">
    <property type="entry name" value="NUCLEOID-ASSOCIATED PROTEIN YEJK"/>
    <property type="match status" value="1"/>
</dbReference>
<dbReference type="Pfam" id="PF04245">
    <property type="entry name" value="NA37"/>
    <property type="match status" value="1"/>
</dbReference>
<feature type="chain" id="PRO_1000045949" description="Nucleoid-associated protein Shewmr7_2293">
    <location>
        <begin position="1"/>
        <end position="342"/>
    </location>
</feature>
<reference key="1">
    <citation type="submission" date="2006-08" db="EMBL/GenBank/DDBJ databases">
        <title>Complete sequence of chromosome 1 of Shewanella sp. MR-7.</title>
        <authorList>
            <person name="Copeland A."/>
            <person name="Lucas S."/>
            <person name="Lapidus A."/>
            <person name="Barry K."/>
            <person name="Detter J.C."/>
            <person name="Glavina del Rio T."/>
            <person name="Hammon N."/>
            <person name="Israni S."/>
            <person name="Dalin E."/>
            <person name="Tice H."/>
            <person name="Pitluck S."/>
            <person name="Kiss H."/>
            <person name="Brettin T."/>
            <person name="Bruce D."/>
            <person name="Han C."/>
            <person name="Tapia R."/>
            <person name="Gilna P."/>
            <person name="Schmutz J."/>
            <person name="Larimer F."/>
            <person name="Land M."/>
            <person name="Hauser L."/>
            <person name="Kyrpides N."/>
            <person name="Mikhailova N."/>
            <person name="Nealson K."/>
            <person name="Konstantinidis K."/>
            <person name="Klappenbach J."/>
            <person name="Tiedje J."/>
            <person name="Richardson P."/>
        </authorList>
    </citation>
    <scope>NUCLEOTIDE SEQUENCE [LARGE SCALE GENOMIC DNA]</scope>
    <source>
        <strain>MR-7</strain>
    </source>
</reference>
<name>NDPA_SHESR</name>
<sequence length="342" mass="38241">MSINIEQAIIHEISQDSQGQLRCRLRPQPLLNSQAVEMMLEELHQTYTSKSGKGFGYFGIHGDDGEANPAFSNALQEYRAGDLGFVEFTGQASKLLQEELAKYDFSQGGFLLMSCYTSMASDFLFVALLSAKSSMTVLDDMELSQNNHLDLSNIQLAARIDLTEWQADKDSRKYISFIRGRAGRKVADFFLDFMGCVEGVNTKAQNKTLMNAVEDFVASSDLTKEERQQCRNKVFEYCSERFDEGADIEIKDLADELADQGMESFYDFARGGCYELDEEFPADKSTLRQLKKFSGTGGGVTISFDGGHLGQRVIYDPISDTLLIKGVPANLKDQLDRRLKGE</sequence>
<organism>
    <name type="scientific">Shewanella sp. (strain MR-7)</name>
    <dbReference type="NCBI Taxonomy" id="60481"/>
    <lineage>
        <taxon>Bacteria</taxon>
        <taxon>Pseudomonadati</taxon>
        <taxon>Pseudomonadota</taxon>
        <taxon>Gammaproteobacteria</taxon>
        <taxon>Alteromonadales</taxon>
        <taxon>Shewanellaceae</taxon>
        <taxon>Shewanella</taxon>
    </lineage>
</organism>
<proteinExistence type="inferred from homology"/>
<gene>
    <name type="ordered locus">Shewmr7_2293</name>
</gene>